<organism>
    <name type="scientific">Staphylococcus aureus (strain Mu3 / ATCC 700698)</name>
    <dbReference type="NCBI Taxonomy" id="418127"/>
    <lineage>
        <taxon>Bacteria</taxon>
        <taxon>Bacillati</taxon>
        <taxon>Bacillota</taxon>
        <taxon>Bacilli</taxon>
        <taxon>Bacillales</taxon>
        <taxon>Staphylococcaceae</taxon>
        <taxon>Staphylococcus</taxon>
    </lineage>
</organism>
<dbReference type="EC" id="4.2.1.11" evidence="1"/>
<dbReference type="EMBL" id="AP009324">
    <property type="protein sequence ID" value="BAF77656.1"/>
    <property type="molecule type" value="Genomic_DNA"/>
</dbReference>
<dbReference type="RefSeq" id="WP_001121760.1">
    <property type="nucleotide sequence ID" value="NZ_CTYB01000039.1"/>
</dbReference>
<dbReference type="SMR" id="A7WZT2"/>
<dbReference type="KEGG" id="saw:SAHV_0773"/>
<dbReference type="HOGENOM" id="CLU_031223_2_1_9"/>
<dbReference type="UniPathway" id="UPA00109">
    <property type="reaction ID" value="UER00187"/>
</dbReference>
<dbReference type="GO" id="GO:0009986">
    <property type="term" value="C:cell surface"/>
    <property type="evidence" value="ECO:0007669"/>
    <property type="project" value="UniProtKB-SubCell"/>
</dbReference>
<dbReference type="GO" id="GO:0005576">
    <property type="term" value="C:extracellular region"/>
    <property type="evidence" value="ECO:0007669"/>
    <property type="project" value="UniProtKB-SubCell"/>
</dbReference>
<dbReference type="GO" id="GO:0000015">
    <property type="term" value="C:phosphopyruvate hydratase complex"/>
    <property type="evidence" value="ECO:0007669"/>
    <property type="project" value="InterPro"/>
</dbReference>
<dbReference type="GO" id="GO:0000287">
    <property type="term" value="F:magnesium ion binding"/>
    <property type="evidence" value="ECO:0007669"/>
    <property type="project" value="UniProtKB-UniRule"/>
</dbReference>
<dbReference type="GO" id="GO:0004634">
    <property type="term" value="F:phosphopyruvate hydratase activity"/>
    <property type="evidence" value="ECO:0007669"/>
    <property type="project" value="UniProtKB-UniRule"/>
</dbReference>
<dbReference type="GO" id="GO:0006096">
    <property type="term" value="P:glycolytic process"/>
    <property type="evidence" value="ECO:0007669"/>
    <property type="project" value="UniProtKB-UniRule"/>
</dbReference>
<dbReference type="CDD" id="cd03313">
    <property type="entry name" value="enolase"/>
    <property type="match status" value="1"/>
</dbReference>
<dbReference type="FunFam" id="3.20.20.120:FF:000001">
    <property type="entry name" value="Enolase"/>
    <property type="match status" value="1"/>
</dbReference>
<dbReference type="FunFam" id="3.30.390.10:FF:000001">
    <property type="entry name" value="Enolase"/>
    <property type="match status" value="1"/>
</dbReference>
<dbReference type="Gene3D" id="3.20.20.120">
    <property type="entry name" value="Enolase-like C-terminal domain"/>
    <property type="match status" value="1"/>
</dbReference>
<dbReference type="Gene3D" id="3.30.390.10">
    <property type="entry name" value="Enolase-like, N-terminal domain"/>
    <property type="match status" value="1"/>
</dbReference>
<dbReference type="HAMAP" id="MF_00318">
    <property type="entry name" value="Enolase"/>
    <property type="match status" value="1"/>
</dbReference>
<dbReference type="InterPro" id="IPR000941">
    <property type="entry name" value="Enolase"/>
</dbReference>
<dbReference type="InterPro" id="IPR036849">
    <property type="entry name" value="Enolase-like_C_sf"/>
</dbReference>
<dbReference type="InterPro" id="IPR029017">
    <property type="entry name" value="Enolase-like_N"/>
</dbReference>
<dbReference type="InterPro" id="IPR020810">
    <property type="entry name" value="Enolase_C"/>
</dbReference>
<dbReference type="InterPro" id="IPR020809">
    <property type="entry name" value="Enolase_CS"/>
</dbReference>
<dbReference type="InterPro" id="IPR020811">
    <property type="entry name" value="Enolase_N"/>
</dbReference>
<dbReference type="NCBIfam" id="TIGR01060">
    <property type="entry name" value="eno"/>
    <property type="match status" value="1"/>
</dbReference>
<dbReference type="PANTHER" id="PTHR11902">
    <property type="entry name" value="ENOLASE"/>
    <property type="match status" value="1"/>
</dbReference>
<dbReference type="PANTHER" id="PTHR11902:SF1">
    <property type="entry name" value="ENOLASE"/>
    <property type="match status" value="1"/>
</dbReference>
<dbReference type="Pfam" id="PF00113">
    <property type="entry name" value="Enolase_C"/>
    <property type="match status" value="1"/>
</dbReference>
<dbReference type="Pfam" id="PF03952">
    <property type="entry name" value="Enolase_N"/>
    <property type="match status" value="1"/>
</dbReference>
<dbReference type="PIRSF" id="PIRSF001400">
    <property type="entry name" value="Enolase"/>
    <property type="match status" value="1"/>
</dbReference>
<dbReference type="PRINTS" id="PR00148">
    <property type="entry name" value="ENOLASE"/>
</dbReference>
<dbReference type="SFLD" id="SFLDF00002">
    <property type="entry name" value="enolase"/>
    <property type="match status" value="1"/>
</dbReference>
<dbReference type="SFLD" id="SFLDG00178">
    <property type="entry name" value="enolase"/>
    <property type="match status" value="1"/>
</dbReference>
<dbReference type="SMART" id="SM01192">
    <property type="entry name" value="Enolase_C"/>
    <property type="match status" value="1"/>
</dbReference>
<dbReference type="SMART" id="SM01193">
    <property type="entry name" value="Enolase_N"/>
    <property type="match status" value="1"/>
</dbReference>
<dbReference type="SUPFAM" id="SSF51604">
    <property type="entry name" value="Enolase C-terminal domain-like"/>
    <property type="match status" value="1"/>
</dbReference>
<dbReference type="SUPFAM" id="SSF54826">
    <property type="entry name" value="Enolase N-terminal domain-like"/>
    <property type="match status" value="1"/>
</dbReference>
<dbReference type="PROSITE" id="PS00164">
    <property type="entry name" value="ENOLASE"/>
    <property type="match status" value="1"/>
</dbReference>
<gene>
    <name evidence="1" type="primary">eno</name>
    <name type="ordered locus">SAHV_0773</name>
</gene>
<protein>
    <recommendedName>
        <fullName evidence="1">Enolase</fullName>
        <ecNumber evidence="1">4.2.1.11</ecNumber>
    </recommendedName>
    <alternativeName>
        <fullName evidence="1">2-phospho-D-glycerate hydro-lyase</fullName>
    </alternativeName>
    <alternativeName>
        <fullName evidence="1">2-phosphoglycerate dehydratase</fullName>
    </alternativeName>
</protein>
<sequence>MPIITDVYAREVLDSRGNPTVEVEVLTESGAFGRALVPSGASTGEHEAVELRDGDKSRYLGKGVTKAVENVNEIIAPEIIEGEFSVLDQVSIDKMMIALDGTPNKGKLGANAILGVSIAVARAAADLLGQPLYKYLGGFNGKQLPVPMMNIVNGGSHSDAPIAFQEFMILPVGATTFKESLRWGTEIFHNLKSILSKRGLETAVGDEGGFAPKFEGTEDAVETIIQAIEAAGYKPGEEVFLGFDCASSEFYENGVYDYSKFEGEHGAKRTAAEQVDYLEQLVDKYPIITIEDGMDENDWDGWKQLTERIGDRVQLVGDDLFVTNTEILAKGIENGIGNSILIKVNQIGTLTETFDAIEMAQKAGYTAVVSHRSGETEDTTIADIAVATNAGQIKTGSLSRTDRIAKYNQLLRIEDELFETAKYDGIKSFYNLDK</sequence>
<evidence type="ECO:0000255" key="1">
    <source>
        <dbReference type="HAMAP-Rule" id="MF_00318"/>
    </source>
</evidence>
<proteinExistence type="inferred from homology"/>
<comment type="function">
    <text evidence="1">Catalyzes the reversible conversion of 2-phosphoglycerate (2-PG) into phosphoenolpyruvate (PEP). It is essential for the degradation of carbohydrates via glycolysis.</text>
</comment>
<comment type="catalytic activity">
    <reaction evidence="1">
        <text>(2R)-2-phosphoglycerate = phosphoenolpyruvate + H2O</text>
        <dbReference type="Rhea" id="RHEA:10164"/>
        <dbReference type="ChEBI" id="CHEBI:15377"/>
        <dbReference type="ChEBI" id="CHEBI:58289"/>
        <dbReference type="ChEBI" id="CHEBI:58702"/>
        <dbReference type="EC" id="4.2.1.11"/>
    </reaction>
</comment>
<comment type="cofactor">
    <cofactor evidence="1">
        <name>Mg(2+)</name>
        <dbReference type="ChEBI" id="CHEBI:18420"/>
    </cofactor>
    <text evidence="1">Binds a second Mg(2+) ion via substrate during catalysis.</text>
</comment>
<comment type="pathway">
    <text evidence="1">Carbohydrate degradation; glycolysis; pyruvate from D-glyceraldehyde 3-phosphate: step 4/5.</text>
</comment>
<comment type="subcellular location">
    <subcellularLocation>
        <location evidence="1">Cytoplasm</location>
    </subcellularLocation>
    <subcellularLocation>
        <location evidence="1">Secreted</location>
    </subcellularLocation>
    <subcellularLocation>
        <location evidence="1">Cell surface</location>
    </subcellularLocation>
    <text evidence="1">Fractions of enolase are present in both the cytoplasm and on the cell surface.</text>
</comment>
<comment type="similarity">
    <text evidence="1">Belongs to the enolase family.</text>
</comment>
<accession>A7WZT2</accession>
<feature type="chain" id="PRO_1000019252" description="Enolase">
    <location>
        <begin position="1"/>
        <end position="434"/>
    </location>
</feature>
<feature type="active site" description="Proton donor" evidence="1">
    <location>
        <position position="207"/>
    </location>
</feature>
<feature type="active site" description="Proton acceptor" evidence="1">
    <location>
        <position position="343"/>
    </location>
</feature>
<feature type="binding site" evidence="1">
    <location>
        <position position="165"/>
    </location>
    <ligand>
        <name>(2R)-2-phosphoglycerate</name>
        <dbReference type="ChEBI" id="CHEBI:58289"/>
    </ligand>
</feature>
<feature type="binding site" evidence="1">
    <location>
        <position position="244"/>
    </location>
    <ligand>
        <name>Mg(2+)</name>
        <dbReference type="ChEBI" id="CHEBI:18420"/>
    </ligand>
</feature>
<feature type="binding site" evidence="1">
    <location>
        <position position="291"/>
    </location>
    <ligand>
        <name>Mg(2+)</name>
        <dbReference type="ChEBI" id="CHEBI:18420"/>
    </ligand>
</feature>
<feature type="binding site" evidence="1">
    <location>
        <position position="318"/>
    </location>
    <ligand>
        <name>Mg(2+)</name>
        <dbReference type="ChEBI" id="CHEBI:18420"/>
    </ligand>
</feature>
<feature type="binding site" evidence="1">
    <location>
        <position position="343"/>
    </location>
    <ligand>
        <name>(2R)-2-phosphoglycerate</name>
        <dbReference type="ChEBI" id="CHEBI:58289"/>
    </ligand>
</feature>
<feature type="binding site" evidence="1">
    <location>
        <position position="372"/>
    </location>
    <ligand>
        <name>(2R)-2-phosphoglycerate</name>
        <dbReference type="ChEBI" id="CHEBI:58289"/>
    </ligand>
</feature>
<feature type="binding site" evidence="1">
    <location>
        <position position="373"/>
    </location>
    <ligand>
        <name>(2R)-2-phosphoglycerate</name>
        <dbReference type="ChEBI" id="CHEBI:58289"/>
    </ligand>
</feature>
<feature type="binding site" evidence="1">
    <location>
        <position position="394"/>
    </location>
    <ligand>
        <name>(2R)-2-phosphoglycerate</name>
        <dbReference type="ChEBI" id="CHEBI:58289"/>
    </ligand>
</feature>
<reference key="1">
    <citation type="journal article" date="2008" name="Antimicrob. Agents Chemother.">
        <title>Mutated response regulator graR is responsible for phenotypic conversion of Staphylococcus aureus from heterogeneous vancomycin-intermediate resistance to vancomycin-intermediate resistance.</title>
        <authorList>
            <person name="Neoh H.-M."/>
            <person name="Cui L."/>
            <person name="Yuzawa H."/>
            <person name="Takeuchi F."/>
            <person name="Matsuo M."/>
            <person name="Hiramatsu K."/>
        </authorList>
    </citation>
    <scope>NUCLEOTIDE SEQUENCE [LARGE SCALE GENOMIC DNA]</scope>
    <source>
        <strain>Mu3 / ATCC 700698</strain>
    </source>
</reference>
<keyword id="KW-0963">Cytoplasm</keyword>
<keyword id="KW-0324">Glycolysis</keyword>
<keyword id="KW-0456">Lyase</keyword>
<keyword id="KW-0460">Magnesium</keyword>
<keyword id="KW-0479">Metal-binding</keyword>
<keyword id="KW-0964">Secreted</keyword>
<keyword id="KW-0843">Virulence</keyword>
<name>ENO_STAA1</name>